<proteinExistence type="inferred from homology"/>
<protein>
    <recommendedName>
        <fullName>Transcriptional regulator MraZ</fullName>
    </recommendedName>
</protein>
<reference key="1">
    <citation type="submission" date="2007-09" db="EMBL/GenBank/DDBJ databases">
        <title>Complete genome sequence of Rickettsia canadensis.</title>
        <authorList>
            <person name="Madan A."/>
            <person name="Fahey J."/>
            <person name="Helton E."/>
            <person name="Ketteman M."/>
            <person name="Madan A."/>
            <person name="Rodrigues S."/>
            <person name="Sanchez A."/>
            <person name="Whiting M."/>
            <person name="Dasch G."/>
            <person name="Eremeeva M."/>
        </authorList>
    </citation>
    <scope>NUCLEOTIDE SEQUENCE [LARGE SCALE GENOMIC DNA]</scope>
    <source>
        <strain>McKiel</strain>
    </source>
</reference>
<name>MRAZ_RICCK</name>
<sequence length="149" mass="16982">MNVFLSKYVNGVDKKSRVSVPANYRAVLGQELFNGVIAYPSIRNKCIEACGISHIEKLRQMIETLDPYSEERDAFETIIFGEALQLSFDSEGRVMLPQSLMQHAGIEEQACFVGKGVIFEIWQPQNFEKYLNSAQKIAYEKRLTLRNAN</sequence>
<comment type="subunit">
    <text evidence="1">Forms oligomers.</text>
</comment>
<comment type="subcellular location">
    <subcellularLocation>
        <location evidence="1">Cytoplasm</location>
        <location evidence="1">Nucleoid</location>
    </subcellularLocation>
</comment>
<comment type="similarity">
    <text evidence="1">Belongs to the MraZ family.</text>
</comment>
<gene>
    <name evidence="1" type="primary">mraZ</name>
    <name type="ordered locus">A1E_02060</name>
</gene>
<keyword id="KW-0963">Cytoplasm</keyword>
<keyword id="KW-0238">DNA-binding</keyword>
<keyword id="KW-0677">Repeat</keyword>
<keyword id="KW-0804">Transcription</keyword>
<keyword id="KW-0805">Transcription regulation</keyword>
<feature type="chain" id="PRO_1000062922" description="Transcriptional regulator MraZ">
    <location>
        <begin position="1"/>
        <end position="149"/>
    </location>
</feature>
<feature type="domain" description="SpoVT-AbrB 1" evidence="2">
    <location>
        <begin position="7"/>
        <end position="54"/>
    </location>
</feature>
<feature type="domain" description="SpoVT-AbrB 2" evidence="2">
    <location>
        <begin position="83"/>
        <end position="126"/>
    </location>
</feature>
<organism>
    <name type="scientific">Rickettsia canadensis (strain McKiel)</name>
    <dbReference type="NCBI Taxonomy" id="293613"/>
    <lineage>
        <taxon>Bacteria</taxon>
        <taxon>Pseudomonadati</taxon>
        <taxon>Pseudomonadota</taxon>
        <taxon>Alphaproteobacteria</taxon>
        <taxon>Rickettsiales</taxon>
        <taxon>Rickettsiaceae</taxon>
        <taxon>Rickettsieae</taxon>
        <taxon>Rickettsia</taxon>
        <taxon>belli group</taxon>
    </lineage>
</organism>
<dbReference type="EMBL" id="CP000409">
    <property type="protein sequence ID" value="ABV73357.1"/>
    <property type="molecule type" value="Genomic_DNA"/>
</dbReference>
<dbReference type="RefSeq" id="WP_012148556.1">
    <property type="nucleotide sequence ID" value="NC_009879.1"/>
</dbReference>
<dbReference type="SMR" id="A8EYC4"/>
<dbReference type="STRING" id="293613.A1E_02060"/>
<dbReference type="KEGG" id="rcm:A1E_02060"/>
<dbReference type="eggNOG" id="COG2001">
    <property type="taxonomic scope" value="Bacteria"/>
</dbReference>
<dbReference type="HOGENOM" id="CLU_107907_1_0_5"/>
<dbReference type="Proteomes" id="UP000007056">
    <property type="component" value="Chromosome"/>
</dbReference>
<dbReference type="GO" id="GO:0005737">
    <property type="term" value="C:cytoplasm"/>
    <property type="evidence" value="ECO:0007669"/>
    <property type="project" value="UniProtKB-UniRule"/>
</dbReference>
<dbReference type="GO" id="GO:0009295">
    <property type="term" value="C:nucleoid"/>
    <property type="evidence" value="ECO:0007669"/>
    <property type="project" value="UniProtKB-SubCell"/>
</dbReference>
<dbReference type="GO" id="GO:0003700">
    <property type="term" value="F:DNA-binding transcription factor activity"/>
    <property type="evidence" value="ECO:0007669"/>
    <property type="project" value="UniProtKB-UniRule"/>
</dbReference>
<dbReference type="GO" id="GO:0000976">
    <property type="term" value="F:transcription cis-regulatory region binding"/>
    <property type="evidence" value="ECO:0007669"/>
    <property type="project" value="TreeGrafter"/>
</dbReference>
<dbReference type="GO" id="GO:2000143">
    <property type="term" value="P:negative regulation of DNA-templated transcription initiation"/>
    <property type="evidence" value="ECO:0007669"/>
    <property type="project" value="TreeGrafter"/>
</dbReference>
<dbReference type="CDD" id="cd16321">
    <property type="entry name" value="MraZ_C"/>
    <property type="match status" value="1"/>
</dbReference>
<dbReference type="CDD" id="cd16320">
    <property type="entry name" value="MraZ_N"/>
    <property type="match status" value="1"/>
</dbReference>
<dbReference type="Gene3D" id="3.40.1550.20">
    <property type="entry name" value="Transcriptional regulator MraZ domain"/>
    <property type="match status" value="1"/>
</dbReference>
<dbReference type="HAMAP" id="MF_01008">
    <property type="entry name" value="MraZ"/>
    <property type="match status" value="1"/>
</dbReference>
<dbReference type="InterPro" id="IPR003444">
    <property type="entry name" value="MraZ"/>
</dbReference>
<dbReference type="InterPro" id="IPR035644">
    <property type="entry name" value="MraZ_C"/>
</dbReference>
<dbReference type="InterPro" id="IPR020603">
    <property type="entry name" value="MraZ_dom"/>
</dbReference>
<dbReference type="InterPro" id="IPR035642">
    <property type="entry name" value="MraZ_N"/>
</dbReference>
<dbReference type="InterPro" id="IPR038619">
    <property type="entry name" value="MraZ_sf"/>
</dbReference>
<dbReference type="InterPro" id="IPR007159">
    <property type="entry name" value="SpoVT-AbrB_dom"/>
</dbReference>
<dbReference type="InterPro" id="IPR037914">
    <property type="entry name" value="SpoVT-AbrB_sf"/>
</dbReference>
<dbReference type="NCBIfam" id="NF001475">
    <property type="entry name" value="PRK00326.2-1"/>
    <property type="match status" value="1"/>
</dbReference>
<dbReference type="PANTHER" id="PTHR34701">
    <property type="entry name" value="TRANSCRIPTIONAL REGULATOR MRAZ"/>
    <property type="match status" value="1"/>
</dbReference>
<dbReference type="PANTHER" id="PTHR34701:SF1">
    <property type="entry name" value="TRANSCRIPTIONAL REGULATOR MRAZ"/>
    <property type="match status" value="1"/>
</dbReference>
<dbReference type="Pfam" id="PF02381">
    <property type="entry name" value="MraZ"/>
    <property type="match status" value="1"/>
</dbReference>
<dbReference type="SUPFAM" id="SSF89447">
    <property type="entry name" value="AbrB/MazE/MraZ-like"/>
    <property type="match status" value="1"/>
</dbReference>
<dbReference type="PROSITE" id="PS51740">
    <property type="entry name" value="SPOVT_ABRB"/>
    <property type="match status" value="2"/>
</dbReference>
<accession>A8EYC4</accession>
<evidence type="ECO:0000255" key="1">
    <source>
        <dbReference type="HAMAP-Rule" id="MF_01008"/>
    </source>
</evidence>
<evidence type="ECO:0000255" key="2">
    <source>
        <dbReference type="PROSITE-ProRule" id="PRU01076"/>
    </source>
</evidence>